<accession>A0A2B7YFS5</accession>
<protein>
    <recommendedName>
        <fullName evidence="4">Cytochrome P450 monooxygenase polC</fullName>
        <ecNumber evidence="3">1.-.-.-</ecNumber>
    </recommendedName>
    <alternativeName>
        <fullName evidence="4">Polytolypin biosynthesis cluster protein C</fullName>
    </alternativeName>
</protein>
<dbReference type="EC" id="1.-.-.-" evidence="3"/>
<dbReference type="EMBL" id="PDNA01000047">
    <property type="protein sequence ID" value="PGH19457.1"/>
    <property type="molecule type" value="Genomic_DNA"/>
</dbReference>
<dbReference type="SMR" id="A0A2B7YFS5"/>
<dbReference type="STRING" id="1447883.A0A2B7YFS5"/>
<dbReference type="OrthoDB" id="10029320at2759"/>
<dbReference type="UniPathway" id="UPA00213"/>
<dbReference type="Proteomes" id="UP000224634">
    <property type="component" value="Unassembled WGS sequence"/>
</dbReference>
<dbReference type="GO" id="GO:0016020">
    <property type="term" value="C:membrane"/>
    <property type="evidence" value="ECO:0007669"/>
    <property type="project" value="UniProtKB-SubCell"/>
</dbReference>
<dbReference type="GO" id="GO:0020037">
    <property type="term" value="F:heme binding"/>
    <property type="evidence" value="ECO:0007669"/>
    <property type="project" value="InterPro"/>
</dbReference>
<dbReference type="GO" id="GO:0005506">
    <property type="term" value="F:iron ion binding"/>
    <property type="evidence" value="ECO:0007669"/>
    <property type="project" value="InterPro"/>
</dbReference>
<dbReference type="GO" id="GO:0004497">
    <property type="term" value="F:monooxygenase activity"/>
    <property type="evidence" value="ECO:0007669"/>
    <property type="project" value="UniProtKB-KW"/>
</dbReference>
<dbReference type="GO" id="GO:0016705">
    <property type="term" value="F:oxidoreductase activity, acting on paired donors, with incorporation or reduction of molecular oxygen"/>
    <property type="evidence" value="ECO:0007669"/>
    <property type="project" value="InterPro"/>
</dbReference>
<dbReference type="CDD" id="cd11051">
    <property type="entry name" value="CYP59-like"/>
    <property type="match status" value="1"/>
</dbReference>
<dbReference type="Gene3D" id="1.10.630.10">
    <property type="entry name" value="Cytochrome P450"/>
    <property type="match status" value="1"/>
</dbReference>
<dbReference type="InterPro" id="IPR001128">
    <property type="entry name" value="Cyt_P450"/>
</dbReference>
<dbReference type="InterPro" id="IPR002401">
    <property type="entry name" value="Cyt_P450_E_grp-I"/>
</dbReference>
<dbReference type="InterPro" id="IPR036396">
    <property type="entry name" value="Cyt_P450_sf"/>
</dbReference>
<dbReference type="InterPro" id="IPR050121">
    <property type="entry name" value="Cytochrome_P450_monoxygenase"/>
</dbReference>
<dbReference type="PANTHER" id="PTHR24305">
    <property type="entry name" value="CYTOCHROME P450"/>
    <property type="match status" value="1"/>
</dbReference>
<dbReference type="PANTHER" id="PTHR24305:SF107">
    <property type="entry name" value="P450, PUTATIVE (EUROFUNG)-RELATED"/>
    <property type="match status" value="1"/>
</dbReference>
<dbReference type="Pfam" id="PF00067">
    <property type="entry name" value="p450"/>
    <property type="match status" value="1"/>
</dbReference>
<dbReference type="PRINTS" id="PR00463">
    <property type="entry name" value="EP450I"/>
</dbReference>
<dbReference type="PRINTS" id="PR00385">
    <property type="entry name" value="P450"/>
</dbReference>
<dbReference type="SUPFAM" id="SSF48264">
    <property type="entry name" value="Cytochrome P450"/>
    <property type="match status" value="1"/>
</dbReference>
<comment type="function">
    <text evidence="3">Cytochrome P450 monooxygenase; part of the gene cluster that mediates the biosynthesis of antifungal fernane-type triterpenoid polytolypin (PubMed:36602159). PolC uses motiol as a substrate and converts the methyl group at position C-4 to a carboxyl group (PubMed:36602159). Within the pathway, the triterpene cyclase polA first catalyzes the cyclization of 2,3-oxidosqualene to motiol, polC converts the 4-alpha-methyl group of motiol to a carboxyl group, polB is responsible for appending a hydroxyl group at the 2-alpha position and polE is a dual functional P450, which can catalyze the formation of both the 1-beta-hydroxyl group and 10-beta-carboxyl group (PubMed:36602159).</text>
</comment>
<comment type="catalytic activity">
    <reaction evidence="3">
        <text>motiol + 3 reduced [NADPH--hemoprotein reductase] + 3 O2 = 4beta-carboxyl motiol + 3 oxidized [NADPH--hemoprotein reductase] + 4 H2O + 4 H(+)</text>
        <dbReference type="Rhea" id="RHEA:80219"/>
        <dbReference type="Rhea" id="RHEA-COMP:11964"/>
        <dbReference type="Rhea" id="RHEA-COMP:11965"/>
        <dbReference type="ChEBI" id="CHEBI:15377"/>
        <dbReference type="ChEBI" id="CHEBI:15378"/>
        <dbReference type="ChEBI" id="CHEBI:15379"/>
        <dbReference type="ChEBI" id="CHEBI:57618"/>
        <dbReference type="ChEBI" id="CHEBI:58210"/>
        <dbReference type="ChEBI" id="CHEBI:231458"/>
        <dbReference type="ChEBI" id="CHEBI:231459"/>
    </reaction>
    <physiologicalReaction direction="left-to-right" evidence="3">
        <dbReference type="Rhea" id="RHEA:80220"/>
    </physiologicalReaction>
</comment>
<comment type="cofactor">
    <cofactor evidence="1">
        <name>heme</name>
        <dbReference type="ChEBI" id="CHEBI:30413"/>
    </cofactor>
</comment>
<comment type="pathway">
    <text evidence="3">Secondary metabolite biosynthesis; terpenoid biosynthesis.</text>
</comment>
<comment type="subcellular location">
    <subcellularLocation>
        <location evidence="2">Membrane</location>
        <topology evidence="2">Single-pass membrane protein</topology>
    </subcellularLocation>
</comment>
<comment type="biotechnology">
    <text evidence="3">Polytolypin and biosynthesis intermediate compounds show antifungal activity and can efficiently inhibit the growth of the pathogenic funfus Candida albicans.</text>
</comment>
<comment type="similarity">
    <text evidence="5">Belongs to the cytochrome P450 family.</text>
</comment>
<evidence type="ECO:0000250" key="1">
    <source>
        <dbReference type="UniProtKB" id="P04798"/>
    </source>
</evidence>
<evidence type="ECO:0000255" key="2"/>
<evidence type="ECO:0000269" key="3">
    <source>
    </source>
</evidence>
<evidence type="ECO:0000303" key="4">
    <source>
    </source>
</evidence>
<evidence type="ECO:0000305" key="5"/>
<sequence>MAVFKLDALRAIDMSKLCFAISLLCAVAIATFLHKLYKARSFMRRLQREGMPMPPHHWLFGHIPVVAKIFGTLPPHAHLFFIADQVRQAYPHLDSAFYLDIWPFGPPSLMTISPELASQFTQDKSLPKYEGVRKFLKPLTGKKDLVSMEGHDWKHWRANFNPGFSASNITNMIPAMVQDVQTYRDIIRRHAVAGDIFPLELPTLAMSMDIIGRVVLDHEFNSQKAYNPLTSALIDQLAWCTIGVHSNPLEYINIARPIVHQYNAWRMNSYLDPLLKLRYETVNQRPKSKYVGDLIMSAYVKENSPDGRPTKMDPVFAEFMRAQVKLFLQAGHDTTAASIVYTFYMLQKHPESLRRLRKELDTVFGPDITATCDVLKEKPQLLSQCNFLLAVTKETLRLYPPTSTARFGLPGFYLTDSDGKRMPTENCLVVANHHGIHHNPRFWPRVEEFLPERWLVDESHPLYPVKNGWRPFERGSRNCLGQELAMTEIKLVVAIMIREFNIHDAYAENDLEKGQREKNLRVNGERAYQITRGGGHPSENFPCRVSLVANKEREIP</sequence>
<reference key="1">
    <citation type="journal article" date="2018" name="Sci. Rep.">
        <title>Genome analysis reveals evolutionary mechanisms of adaptation in systemic dimorphic fungi.</title>
        <authorList>
            <person name="Munoz J.F."/>
            <person name="McEwen J.G."/>
            <person name="Clay O.K."/>
            <person name="Cuomo C.A."/>
        </authorList>
    </citation>
    <scope>NUCLEOTIDE SEQUENCE [LARGE SCALE GENOMIC DNA]</scope>
    <source>
        <strain>UAMH7299</strain>
    </source>
</reference>
<reference key="2">
    <citation type="journal article" date="2023" name="Org. Biomol. Chem.">
        <title>Biosynthetic characterization of the antifungal fernane-type triterpenoid polytolypin for generation of new analogues via combinatorial biosynthesis.</title>
        <authorList>
            <person name="Li X.Y."/>
            <person name="Lv J.M."/>
            <person name="Cao Z.Q."/>
            <person name="Wang G.Q."/>
            <person name="Lin F.L."/>
            <person name="Chen G.D."/>
            <person name="Qin S.Y."/>
            <person name="Hu D."/>
            <person name="Gao H."/>
            <person name="Yao X.S."/>
        </authorList>
    </citation>
    <scope>FUNCTION</scope>
    <scope>CATALYTIC ACTIVITY</scope>
    <scope>PATHWAY</scope>
    <scope>BIOTECHNOLOGY</scope>
</reference>
<proteinExistence type="evidence at protein level"/>
<feature type="chain" id="PRO_0000460596" description="Cytochrome P450 monooxygenase polC">
    <location>
        <begin position="1"/>
        <end position="556"/>
    </location>
</feature>
<feature type="transmembrane region" description="Helical" evidence="2">
    <location>
        <begin position="17"/>
        <end position="37"/>
    </location>
</feature>
<feature type="binding site" description="axial binding residue" evidence="1">
    <location>
        <position position="479"/>
    </location>
    <ligand>
        <name>heme</name>
        <dbReference type="ChEBI" id="CHEBI:30413"/>
    </ligand>
    <ligandPart>
        <name>Fe</name>
        <dbReference type="ChEBI" id="CHEBI:18248"/>
    </ligandPart>
</feature>
<name>POLC_POLH7</name>
<gene>
    <name evidence="4" type="primary">polC</name>
    <name type="ORF">AJ80_03958</name>
</gene>
<keyword id="KW-0349">Heme</keyword>
<keyword id="KW-0408">Iron</keyword>
<keyword id="KW-0472">Membrane</keyword>
<keyword id="KW-0479">Metal-binding</keyword>
<keyword id="KW-0503">Monooxygenase</keyword>
<keyword id="KW-0560">Oxidoreductase</keyword>
<keyword id="KW-1185">Reference proteome</keyword>
<keyword id="KW-0812">Transmembrane</keyword>
<keyword id="KW-1133">Transmembrane helix</keyword>
<organism>
    <name type="scientific">Polytolypa hystricis (strain UAMH7299)</name>
    <dbReference type="NCBI Taxonomy" id="1447883"/>
    <lineage>
        <taxon>Eukaryota</taxon>
        <taxon>Fungi</taxon>
        <taxon>Dikarya</taxon>
        <taxon>Ascomycota</taxon>
        <taxon>Pezizomycotina</taxon>
        <taxon>Eurotiomycetes</taxon>
        <taxon>Eurotiomycetidae</taxon>
        <taxon>Onygenales</taxon>
        <taxon>Onygenales incertae sedis</taxon>
        <taxon>Polytolypa</taxon>
    </lineage>
</organism>